<evidence type="ECO:0000250" key="1">
    <source>
        <dbReference type="UniProtKB" id="Q6P3X3"/>
    </source>
</evidence>
<evidence type="ECO:0000269" key="2">
    <source>
    </source>
</evidence>
<evidence type="ECO:0000305" key="3"/>
<evidence type="ECO:0000312" key="4">
    <source>
        <dbReference type="WormBase" id="T20B12.1"/>
    </source>
</evidence>
<dbReference type="EMBL" id="FO081094">
    <property type="protein sequence ID" value="CCD69079.1"/>
    <property type="molecule type" value="Genomic_DNA"/>
</dbReference>
<dbReference type="PIR" id="T16901">
    <property type="entry name" value="T16901"/>
</dbReference>
<dbReference type="RefSeq" id="NP_498636.2">
    <property type="nucleotide sequence ID" value="NM_066235.7"/>
</dbReference>
<dbReference type="SMR" id="P41842"/>
<dbReference type="BioGRID" id="41264">
    <property type="interactions" value="22"/>
</dbReference>
<dbReference type="FunCoup" id="P41842">
    <property type="interactions" value="2933"/>
</dbReference>
<dbReference type="STRING" id="6239.T20B12.1.1"/>
<dbReference type="PaxDb" id="6239-T20B12.1"/>
<dbReference type="PeptideAtlas" id="P41842"/>
<dbReference type="EnsemblMetazoa" id="T20B12.1.1">
    <property type="protein sequence ID" value="T20B12.1.1"/>
    <property type="gene ID" value="WBGene00020600"/>
</dbReference>
<dbReference type="GeneID" id="176055"/>
<dbReference type="KEGG" id="cel:CELE_T20B12.1"/>
<dbReference type="UCSC" id="T20B12.1">
    <property type="organism name" value="c. elegans"/>
</dbReference>
<dbReference type="AGR" id="WB:WBGene00020600"/>
<dbReference type="CTD" id="176055"/>
<dbReference type="WormBase" id="T20B12.1">
    <property type="protein sequence ID" value="CE41454"/>
    <property type="gene ID" value="WBGene00020600"/>
    <property type="gene designation" value="trd-1"/>
</dbReference>
<dbReference type="eggNOG" id="KOG1128">
    <property type="taxonomic scope" value="Eukaryota"/>
</dbReference>
<dbReference type="GeneTree" id="ENSGT00500000044929"/>
<dbReference type="HOGENOM" id="CLU_004905_2_0_1"/>
<dbReference type="InParanoid" id="P41842"/>
<dbReference type="OMA" id="KESTQCY"/>
<dbReference type="OrthoDB" id="1936594at2759"/>
<dbReference type="PhylomeDB" id="P41842"/>
<dbReference type="PRO" id="PR:P41842"/>
<dbReference type="Proteomes" id="UP000001940">
    <property type="component" value="Chromosome III"/>
</dbReference>
<dbReference type="Bgee" id="WBGene00020600">
    <property type="expression patterns" value="Expressed in germ line (C elegans) and 4 other cell types or tissues"/>
</dbReference>
<dbReference type="GO" id="GO:0005737">
    <property type="term" value="C:cytoplasm"/>
    <property type="evidence" value="ECO:0007669"/>
    <property type="project" value="UniProtKB-SubCell"/>
</dbReference>
<dbReference type="GO" id="GO:0030154">
    <property type="term" value="P:cell differentiation"/>
    <property type="evidence" value="ECO:0007669"/>
    <property type="project" value="UniProtKB-KW"/>
</dbReference>
<dbReference type="Gene3D" id="1.25.40.10">
    <property type="entry name" value="Tetratricopeptide repeat domain"/>
    <property type="match status" value="1"/>
</dbReference>
<dbReference type="InterPro" id="IPR002885">
    <property type="entry name" value="Pentatricopeptide_rpt"/>
</dbReference>
<dbReference type="InterPro" id="IPR011990">
    <property type="entry name" value="TPR-like_helical_dom_sf"/>
</dbReference>
<dbReference type="InterPro" id="IPR019734">
    <property type="entry name" value="TPR_rpt"/>
</dbReference>
<dbReference type="InterPro" id="IPR044244">
    <property type="entry name" value="TTC27/Emw1"/>
</dbReference>
<dbReference type="PANTHER" id="PTHR16193">
    <property type="entry name" value="TETRATRICOPEPTIDE REPEAT PROTEIN 27"/>
    <property type="match status" value="1"/>
</dbReference>
<dbReference type="PANTHER" id="PTHR16193:SF0">
    <property type="entry name" value="TETRATRICOPEPTIDE REPEAT PROTEIN 27"/>
    <property type="match status" value="1"/>
</dbReference>
<dbReference type="Pfam" id="PF01535">
    <property type="entry name" value="PPR"/>
    <property type="match status" value="2"/>
</dbReference>
<dbReference type="Pfam" id="PF13432">
    <property type="entry name" value="TPR_16"/>
    <property type="match status" value="1"/>
</dbReference>
<dbReference type="Pfam" id="PF13181">
    <property type="entry name" value="TPR_8"/>
    <property type="match status" value="1"/>
</dbReference>
<dbReference type="SMART" id="SM00028">
    <property type="entry name" value="TPR"/>
    <property type="match status" value="4"/>
</dbReference>
<dbReference type="SUPFAM" id="SSF48452">
    <property type="entry name" value="TPR-like"/>
    <property type="match status" value="1"/>
</dbReference>
<dbReference type="PROSITE" id="PS50005">
    <property type="entry name" value="TPR"/>
    <property type="match status" value="5"/>
</dbReference>
<dbReference type="PROSITE" id="PS50293">
    <property type="entry name" value="TPR_REGION"/>
    <property type="match status" value="1"/>
</dbReference>
<accession>P41842</accession>
<reference key="1">
    <citation type="journal article" date="1998" name="Science">
        <title>Genome sequence of the nematode C. elegans: a platform for investigating biology.</title>
        <authorList>
            <consortium name="The C. elegans sequencing consortium"/>
        </authorList>
    </citation>
    <scope>NUCLEOTIDE SEQUENCE [LARGE SCALE GENOMIC DNA]</scope>
    <source>
        <strain>Bristol N2</strain>
    </source>
</reference>
<reference key="2">
    <citation type="journal article" date="2014" name="PLoS ONE">
        <title>The C. elegans TPR containing protein, TRD-1, regulates cell fate choice in the developing germ line and epidermis.</title>
        <authorList>
            <person name="Hughes S."/>
            <person name="Wilkinson H."/>
            <person name="Gilbert S.P."/>
            <person name="Kishida M."/>
            <person name="Ding S.S."/>
            <person name="Woollard A."/>
        </authorList>
    </citation>
    <scope>FUNCTION</scope>
    <scope>SUBCELLULAR LOCATION</scope>
    <scope>TISSUE SPECIFICITY</scope>
    <scope>DEVELOPMENTAL STAGE</scope>
    <scope>DISRUPTION PHENOTYPE</scope>
</reference>
<name>TTC27_CAEEL</name>
<organism>
    <name type="scientific">Caenorhabditis elegans</name>
    <dbReference type="NCBI Taxonomy" id="6239"/>
    <lineage>
        <taxon>Eukaryota</taxon>
        <taxon>Metazoa</taxon>
        <taxon>Ecdysozoa</taxon>
        <taxon>Nematoda</taxon>
        <taxon>Chromadorea</taxon>
        <taxon>Rhabditida</taxon>
        <taxon>Rhabditina</taxon>
        <taxon>Rhabditomorpha</taxon>
        <taxon>Rhabditoidea</taxon>
        <taxon>Rhabditidae</taxon>
        <taxon>Peloderinae</taxon>
        <taxon>Caenorhabditis</taxon>
    </lineage>
</organism>
<keyword id="KW-0963">Cytoplasm</keyword>
<keyword id="KW-0221">Differentiation</keyword>
<keyword id="KW-1185">Reference proteome</keyword>
<keyword id="KW-0677">Repeat</keyword>
<keyword id="KW-0802">TPR repeat</keyword>
<sequence>MIPADIIASIAGLVNEKDIEKITSEYQDNIWEFVESLVTHVLASNHVGYSDYNTSSFISEELARQKLSCGLNIPNAVSKSLWALHLAHEHVEKLKDLSDIPPIGYRVILEFYLVWQQLLIDPEETIRTEIEPIMEKLRVLIAEENDAFTSEDRCQIQLEMAAVRFQFYEYDKADNLIKSASEECQLNMDLSGMMGKRTRFQQRDIAQLVLIHKDPSTTGTPLPPDSDIPQSLDMNDDTLLEQVAITEQGARVDGRTLNACQLSCLLWIARHESATHRHDVLVHERCSPVLDTVIAARRYWSIQAAALLARAELERGRVRQVDRSCTQSELVVKLQQGVDDPVLIKDRLLRTSYILASGLTPFWQSSVLLAGILNSLGCTSEALLILEKLEMWDGVIDCYKQLGQMDKAETLIRRLIEQKPNDSMLHVYLGDITRNLEYFTKAIELSDDRNARAHRSLGHLLLMDKKFEEAYKHLRRSLELQPIQLGTWFNAGYCAWKLENFKESTQCYHRCVSLQPDHFEAWNNLSAAYIRHGQKPKAWKLLQEALKYNYEHPNVWENYMLLSVDVGEFSQAIQAYHRLLDMNKRGADDEVLELIAQTLLRREAEISMDESEDKAQNEAENRKEKEEMIKLLARISANHQTLSPKTLRVYALLKKPSVLSSETRTEFEKYVRLLEKSLAAANGKLTWPKEEKLALEVVETAVRLAEDRLELAKFIASDTSVKEASAKVRLSLRGILTRLDKDSGSRVSGDETEKLQEIVEVAKSLLDSVAI</sequence>
<feature type="chain" id="PRO_0000106423" description="Tetratricopeptide repeat-containing protein trd-1" evidence="3">
    <location>
        <begin position="1"/>
        <end position="771"/>
    </location>
</feature>
<feature type="repeat" description="TPR 1">
    <location>
        <begin position="389"/>
        <end position="415"/>
    </location>
</feature>
<feature type="repeat" description="TPR 2">
    <location>
        <begin position="416"/>
        <end position="449"/>
    </location>
</feature>
<feature type="repeat" description="TPR 3">
    <location>
        <begin position="451"/>
        <end position="484"/>
    </location>
</feature>
<feature type="repeat" description="TPR 4">
    <location>
        <begin position="485"/>
        <end position="518"/>
    </location>
</feature>
<feature type="repeat" description="TPR 5">
    <location>
        <begin position="520"/>
        <end position="552"/>
    </location>
</feature>
<feature type="repeat" description="TPR 6">
    <location>
        <begin position="553"/>
        <end position="586"/>
    </location>
</feature>
<gene>
    <name evidence="4" type="primary">trd-1</name>
    <name evidence="4" type="ORF">T20B12.1</name>
</gene>
<comment type="function">
    <text evidence="2">Developmental protein required for cell fate determination in both the germline and seam cells of the developing epidermis. Specifically, involved in sex determination and may function in parallel or downstream of other sex determination factors, including tra-2 and fem-3, to promote oogenesis in its role in the regulation of the switch from spermatogenesis to oogenesis in the gonads. Also implicated in the mitosis to meiosis switch in distal tip cells.</text>
</comment>
<comment type="subcellular location">
    <subcellularLocation>
        <location evidence="2">Cytoplasm</location>
    </subcellularLocation>
</comment>
<comment type="tissue specificity">
    <text evidence="2">Expressed in the spermatheca.</text>
</comment>
<comment type="developmental stage">
    <text evidence="2">Expressed in seam cells throughout postembryonic development. Expressed in the developing gonad, distal tip cells and spermatheca from larval stage L3.</text>
</comment>
<comment type="disruption phenotype">
    <text evidence="2">High level of lethality with a significant reduction in seam cell number. RNAi-mediated knockdown results in defects linked to cell fate determination including impaired hypodermal differentiation, fewer seam cells, possibly due to a change in cell fate, a molting defect in 10% of animals and male tail abnormalities, including reduced sensory ray number. The germline exhibits a mog (masculinization of the germline) phenotype with increased sperm numbers and largely absent oocytes in the gonad. Defective mitosis to meiosis switching and general impaired morphology in distal tip cells with abnormal extending processes (cytonemes) that are thicker and extend further into the proximal gonad from early stages of development.</text>
</comment>
<comment type="similarity">
    <text evidence="3">Belongs to the TTC27 family.</text>
</comment>
<proteinExistence type="evidence at transcript level"/>
<protein>
    <recommendedName>
        <fullName evidence="1">Tetratricopeptide repeat-containing protein trd-1</fullName>
        <shortName evidence="1">TPR repeat protein 27</shortName>
    </recommendedName>
    <alternativeName>
        <fullName evidence="4">Tetratricopeptide repeat regulator of differentiation protein 1</fullName>
    </alternativeName>
</protein>